<sequence>NEGKAKCGNTAGSKLTFKSADECTKTGQK</sequence>
<organism>
    <name type="scientific">Olindias sambaquiensis</name>
    <name type="common">Hydromedusa</name>
    <dbReference type="NCBI Taxonomy" id="497392"/>
    <lineage>
        <taxon>Eukaryota</taxon>
        <taxon>Metazoa</taxon>
        <taxon>Cnidaria</taxon>
        <taxon>Hydrozoa</taxon>
        <taxon>Trachylinae</taxon>
        <taxon>Limnomedusae</taxon>
        <taxon>Olindiidae</taxon>
        <taxon>Olindias</taxon>
    </lineage>
</organism>
<protein>
    <recommendedName>
        <fullName evidence="2">Cytolysin Oshem 1</fullName>
    </recommendedName>
    <alternativeName>
        <fullName>Small basic hemolytic peptide</fullName>
    </alternativeName>
</protein>
<feature type="peptide" id="PRO_0000457165" description="Cytolysin Oshem 1" evidence="1">
    <location>
        <begin position="1"/>
        <end position="29"/>
    </location>
</feature>
<reference key="1">
    <citation type="journal article" date="2014" name="J. Venom. Anim. Toxins Incl. Trop. Dis.">
        <title>Identification of two novel cytolysins from the hydrozoan Olindias sambaquiensis (Cnidaria).</title>
        <authorList>
            <person name="Haddad V. Jr."/>
            <person name="Zara F."/>
            <person name="Marangoni S."/>
            <person name="Toyama D.O."/>
            <person name="de Souza A.J.F."/>
            <person name="Buzzo de Oliveira S.C."/>
            <person name="Toyama M.H."/>
        </authorList>
    </citation>
    <scope>PROTEIN SEQUENCE</scope>
    <scope>FUNCTION</scope>
    <scope>SUBCELLULAR LOCATION</scope>
    <scope>MASS SPECTROMETRY</scope>
</reference>
<name>CYT1_OLISA</name>
<proteinExistence type="evidence at protein level"/>
<keyword id="KW-0204">Cytolysis</keyword>
<keyword id="KW-0903">Direct protein sequencing</keyword>
<keyword id="KW-0472">Membrane</keyword>
<keyword id="KW-0166">Nematocyst</keyword>
<keyword id="KW-0964">Secreted</keyword>
<keyword id="KW-1052">Target cell membrane</keyword>
<keyword id="KW-1053">Target membrane</keyword>
<evidence type="ECO:0000269" key="1">
    <source>
    </source>
</evidence>
<evidence type="ECO:0000303" key="2">
    <source>
    </source>
</evidence>
<evidence type="ECO:0000305" key="3">
    <source>
    </source>
</evidence>
<dbReference type="GO" id="GO:0005576">
    <property type="term" value="C:extracellular region"/>
    <property type="evidence" value="ECO:0007669"/>
    <property type="project" value="UniProtKB-SubCell"/>
</dbReference>
<dbReference type="GO" id="GO:0016020">
    <property type="term" value="C:membrane"/>
    <property type="evidence" value="ECO:0007669"/>
    <property type="project" value="UniProtKB-KW"/>
</dbReference>
<dbReference type="GO" id="GO:0042151">
    <property type="term" value="C:nematocyst"/>
    <property type="evidence" value="ECO:0007669"/>
    <property type="project" value="UniProtKB-SubCell"/>
</dbReference>
<dbReference type="GO" id="GO:0044218">
    <property type="term" value="C:other organism cell membrane"/>
    <property type="evidence" value="ECO:0007669"/>
    <property type="project" value="UniProtKB-KW"/>
</dbReference>
<dbReference type="GO" id="GO:0031640">
    <property type="term" value="P:killing of cells of another organism"/>
    <property type="evidence" value="ECO:0007669"/>
    <property type="project" value="UniProtKB-KW"/>
</dbReference>
<comment type="function">
    <text evidence="1">Cytolysin that shows moderate hemolysis and moderate myonecrosis.</text>
</comment>
<comment type="subcellular location">
    <subcellularLocation>
        <location evidence="1">Secreted</location>
    </subcellularLocation>
    <subcellularLocation>
        <location evidence="3">Nematocyst</location>
    </subcellularLocation>
    <subcellularLocation>
        <location evidence="3">Target cell membrane</location>
    </subcellularLocation>
</comment>
<comment type="domain">
    <text evidence="1">Circular dichroism reveals that this peptide has random coils and small alpha-helix conformation as main secondary structure.</text>
</comment>
<comment type="mass spectrometry"/>
<accession>P0DQW8</accession>